<reference key="1">
    <citation type="journal article" date="2006" name="J. Bacteriol.">
        <title>Comparison of the genome sequence of the poultry pathogen Bordetella avium with those of B. bronchiseptica, B. pertussis, and B. parapertussis reveals extensive diversity in surface structures associated with host interaction.</title>
        <authorList>
            <person name="Sebaihia M."/>
            <person name="Preston A."/>
            <person name="Maskell D.J."/>
            <person name="Kuzmiak H."/>
            <person name="Connell T.D."/>
            <person name="King N.D."/>
            <person name="Orndorff P.E."/>
            <person name="Miyamoto D.M."/>
            <person name="Thomson N.R."/>
            <person name="Harris D."/>
            <person name="Goble A."/>
            <person name="Lord A."/>
            <person name="Murphy L."/>
            <person name="Quail M.A."/>
            <person name="Rutter S."/>
            <person name="Squares R."/>
            <person name="Squares S."/>
            <person name="Woodward J."/>
            <person name="Parkhill J."/>
            <person name="Temple L.M."/>
        </authorList>
    </citation>
    <scope>NUCLEOTIDE SEQUENCE [LARGE SCALE GENOMIC DNA]</scope>
    <source>
        <strain>197N</strain>
    </source>
</reference>
<accession>Q2KV01</accession>
<evidence type="ECO:0000255" key="1">
    <source>
        <dbReference type="HAMAP-Rule" id="MF_01366"/>
    </source>
</evidence>
<evidence type="ECO:0000305" key="2"/>
<name>RL13_BORA1</name>
<feature type="chain" id="PRO_0000261691" description="Large ribosomal subunit protein uL13">
    <location>
        <begin position="1"/>
        <end position="142"/>
    </location>
</feature>
<gene>
    <name evidence="1" type="primary">rplM</name>
    <name type="ordered locus">BAV2970</name>
</gene>
<dbReference type="EMBL" id="AM167904">
    <property type="protein sequence ID" value="CAJ50580.1"/>
    <property type="molecule type" value="Genomic_DNA"/>
</dbReference>
<dbReference type="RefSeq" id="WP_012418609.1">
    <property type="nucleotide sequence ID" value="NC_010645.1"/>
</dbReference>
<dbReference type="SMR" id="Q2KV01"/>
<dbReference type="STRING" id="360910.BAV2970"/>
<dbReference type="GeneID" id="92933772"/>
<dbReference type="KEGG" id="bav:BAV2970"/>
<dbReference type="eggNOG" id="COG0102">
    <property type="taxonomic scope" value="Bacteria"/>
</dbReference>
<dbReference type="HOGENOM" id="CLU_082184_2_2_4"/>
<dbReference type="OrthoDB" id="9801330at2"/>
<dbReference type="Proteomes" id="UP000001977">
    <property type="component" value="Chromosome"/>
</dbReference>
<dbReference type="GO" id="GO:0022625">
    <property type="term" value="C:cytosolic large ribosomal subunit"/>
    <property type="evidence" value="ECO:0007669"/>
    <property type="project" value="TreeGrafter"/>
</dbReference>
<dbReference type="GO" id="GO:0003729">
    <property type="term" value="F:mRNA binding"/>
    <property type="evidence" value="ECO:0007669"/>
    <property type="project" value="TreeGrafter"/>
</dbReference>
<dbReference type="GO" id="GO:0003735">
    <property type="term" value="F:structural constituent of ribosome"/>
    <property type="evidence" value="ECO:0007669"/>
    <property type="project" value="InterPro"/>
</dbReference>
<dbReference type="GO" id="GO:0017148">
    <property type="term" value="P:negative regulation of translation"/>
    <property type="evidence" value="ECO:0007669"/>
    <property type="project" value="TreeGrafter"/>
</dbReference>
<dbReference type="GO" id="GO:0006412">
    <property type="term" value="P:translation"/>
    <property type="evidence" value="ECO:0007669"/>
    <property type="project" value="UniProtKB-UniRule"/>
</dbReference>
<dbReference type="CDD" id="cd00392">
    <property type="entry name" value="Ribosomal_L13"/>
    <property type="match status" value="1"/>
</dbReference>
<dbReference type="FunFam" id="3.90.1180.10:FF:000001">
    <property type="entry name" value="50S ribosomal protein L13"/>
    <property type="match status" value="1"/>
</dbReference>
<dbReference type="Gene3D" id="3.90.1180.10">
    <property type="entry name" value="Ribosomal protein L13"/>
    <property type="match status" value="1"/>
</dbReference>
<dbReference type="HAMAP" id="MF_01366">
    <property type="entry name" value="Ribosomal_uL13"/>
    <property type="match status" value="1"/>
</dbReference>
<dbReference type="InterPro" id="IPR005822">
    <property type="entry name" value="Ribosomal_uL13"/>
</dbReference>
<dbReference type="InterPro" id="IPR005823">
    <property type="entry name" value="Ribosomal_uL13_bac-type"/>
</dbReference>
<dbReference type="InterPro" id="IPR036899">
    <property type="entry name" value="Ribosomal_uL13_sf"/>
</dbReference>
<dbReference type="NCBIfam" id="TIGR01066">
    <property type="entry name" value="rplM_bact"/>
    <property type="match status" value="1"/>
</dbReference>
<dbReference type="PANTHER" id="PTHR11545:SF2">
    <property type="entry name" value="LARGE RIBOSOMAL SUBUNIT PROTEIN UL13M"/>
    <property type="match status" value="1"/>
</dbReference>
<dbReference type="PANTHER" id="PTHR11545">
    <property type="entry name" value="RIBOSOMAL PROTEIN L13"/>
    <property type="match status" value="1"/>
</dbReference>
<dbReference type="Pfam" id="PF00572">
    <property type="entry name" value="Ribosomal_L13"/>
    <property type="match status" value="1"/>
</dbReference>
<dbReference type="PIRSF" id="PIRSF002181">
    <property type="entry name" value="Ribosomal_L13"/>
    <property type="match status" value="1"/>
</dbReference>
<dbReference type="SUPFAM" id="SSF52161">
    <property type="entry name" value="Ribosomal protein L13"/>
    <property type="match status" value="1"/>
</dbReference>
<proteinExistence type="inferred from homology"/>
<keyword id="KW-1185">Reference proteome</keyword>
<keyword id="KW-0687">Ribonucleoprotein</keyword>
<keyword id="KW-0689">Ribosomal protein</keyword>
<comment type="function">
    <text evidence="1">This protein is one of the early assembly proteins of the 50S ribosomal subunit, although it is not seen to bind rRNA by itself. It is important during the early stages of 50S assembly.</text>
</comment>
<comment type="subunit">
    <text evidence="1">Part of the 50S ribosomal subunit.</text>
</comment>
<comment type="similarity">
    <text evidence="1">Belongs to the universal ribosomal protein uL13 family.</text>
</comment>
<sequence>MKTFVAKPHEVTRDWFVIDAKGKVLGRVASEVARRLRGKHKPEFTPHVDTGDYIVIINAADIVVTGKKSQDKKYFRHTTYPGGIRETNFEKMQERFPGRAIQKAVKGMLPKGPLGYAMIKKLKVYAGAEHPHTAQQPKPLDL</sequence>
<protein>
    <recommendedName>
        <fullName evidence="1">Large ribosomal subunit protein uL13</fullName>
    </recommendedName>
    <alternativeName>
        <fullName evidence="2">50S ribosomal protein L13</fullName>
    </alternativeName>
</protein>
<organism>
    <name type="scientific">Bordetella avium (strain 197N)</name>
    <dbReference type="NCBI Taxonomy" id="360910"/>
    <lineage>
        <taxon>Bacteria</taxon>
        <taxon>Pseudomonadati</taxon>
        <taxon>Pseudomonadota</taxon>
        <taxon>Betaproteobacteria</taxon>
        <taxon>Burkholderiales</taxon>
        <taxon>Alcaligenaceae</taxon>
        <taxon>Bordetella</taxon>
    </lineage>
</organism>